<accession>H3BUK9</accession>
<organism>
    <name type="scientific">Homo sapiens</name>
    <name type="common">Human</name>
    <dbReference type="NCBI Taxonomy" id="9606"/>
    <lineage>
        <taxon>Eukaryota</taxon>
        <taxon>Metazoa</taxon>
        <taxon>Chordata</taxon>
        <taxon>Craniata</taxon>
        <taxon>Vertebrata</taxon>
        <taxon>Euteleostomi</taxon>
        <taxon>Mammalia</taxon>
        <taxon>Eutheria</taxon>
        <taxon>Euarchontoglires</taxon>
        <taxon>Primates</taxon>
        <taxon>Haplorrhini</taxon>
        <taxon>Catarrhini</taxon>
        <taxon>Hominidae</taxon>
        <taxon>Homo</taxon>
    </lineage>
</organism>
<comment type="similarity">
    <text evidence="2">Belongs to the POTE family.</text>
</comment>
<comment type="caution">
    <text evidence="2">Maps to a duplicated region on chromosome 15; the gene is present in at least 3 almost identical copies.</text>
</comment>
<feature type="chain" id="PRO_0000423303" description="POTE ankyrin domain family member B2">
    <location>
        <begin position="1"/>
        <end position="544"/>
    </location>
</feature>
<feature type="repeat" description="ANK 1">
    <location>
        <begin position="135"/>
        <end position="167"/>
    </location>
</feature>
<feature type="repeat" description="ANK 2">
    <location>
        <begin position="168"/>
        <end position="200"/>
    </location>
</feature>
<feature type="repeat" description="ANK 3">
    <location>
        <begin position="201"/>
        <end position="233"/>
    </location>
</feature>
<feature type="repeat" description="ANK 4">
    <location>
        <begin position="234"/>
        <end position="266"/>
    </location>
</feature>
<feature type="repeat" description="ANK 5">
    <location>
        <begin position="267"/>
        <end position="299"/>
    </location>
</feature>
<feature type="region of interest" description="Disordered" evidence="1">
    <location>
        <begin position="332"/>
        <end position="457"/>
    </location>
</feature>
<feature type="compositionally biased region" description="Basic and acidic residues" evidence="1">
    <location>
        <begin position="340"/>
        <end position="355"/>
    </location>
</feature>
<feature type="compositionally biased region" description="Basic and acidic residues" evidence="1">
    <location>
        <begin position="364"/>
        <end position="375"/>
    </location>
</feature>
<feature type="compositionally biased region" description="Polar residues" evidence="1">
    <location>
        <begin position="439"/>
        <end position="457"/>
    </location>
</feature>
<dbReference type="EMBL" id="AC012414">
    <property type="status" value="NOT_ANNOTATED_CDS"/>
    <property type="molecule type" value="Genomic_DNA"/>
</dbReference>
<dbReference type="CCDS" id="CCDS59248.1"/>
<dbReference type="RefSeq" id="NP_001264232.1">
    <property type="nucleotide sequence ID" value="NM_001277303.1"/>
</dbReference>
<dbReference type="RefSeq" id="NP_001264233.1">
    <property type="nucleotide sequence ID" value="NM_001277304.1"/>
</dbReference>
<dbReference type="SMR" id="H3BUK9"/>
<dbReference type="BioGRID" id="3190427">
    <property type="interactions" value="14"/>
</dbReference>
<dbReference type="BioGRID" id="939060">
    <property type="interactions" value="5"/>
</dbReference>
<dbReference type="IntAct" id="H3BUK9">
    <property type="interactions" value="4"/>
</dbReference>
<dbReference type="STRING" id="9606.ENSP00000456953"/>
<dbReference type="iPTMnet" id="H3BUK9"/>
<dbReference type="PhosphoSitePlus" id="H3BUK9"/>
<dbReference type="BioMuta" id="POTEB2"/>
<dbReference type="jPOST" id="H3BUK9"/>
<dbReference type="MassIVE" id="H3BUK9"/>
<dbReference type="PaxDb" id="9606-ENSP00000456953"/>
<dbReference type="ProteomicsDB" id="42961"/>
<dbReference type="DNASU" id="100287399"/>
<dbReference type="Ensembl" id="ENST00000454856.4">
    <property type="protein sequence ID" value="ENSP00000456953.1"/>
    <property type="gene ID" value="ENSG00000230031.10"/>
</dbReference>
<dbReference type="GeneID" id="100287399"/>
<dbReference type="GeneID" id="100996331"/>
<dbReference type="KEGG" id="hsa:100287399"/>
<dbReference type="KEGG" id="hsa:100996331"/>
<dbReference type="MANE-Select" id="ENST00000454856.4">
    <property type="protein sequence ID" value="ENSP00000456953.1"/>
    <property type="RefSeq nucleotide sequence ID" value="NM_001277303.1"/>
    <property type="RefSeq protein sequence ID" value="NP_001264232.1"/>
</dbReference>
<dbReference type="UCSC" id="uc031qqz.2">
    <property type="organism name" value="human"/>
</dbReference>
<dbReference type="AGR" id="HGNC:33734"/>
<dbReference type="AGR" id="HGNC:48327"/>
<dbReference type="CTD" id="100287399"/>
<dbReference type="GeneCards" id="POTEB2"/>
<dbReference type="HGNC" id="HGNC:48327">
    <property type="gene designation" value="POTEB2"/>
</dbReference>
<dbReference type="HPA" id="ENSG00000230031">
    <property type="expression patterns" value="Tissue enriched (testis)"/>
</dbReference>
<dbReference type="neXtProt" id="NX_H3BUK9"/>
<dbReference type="VEuPathDB" id="HostDB:ENSG00000230031"/>
<dbReference type="eggNOG" id="KOG0676">
    <property type="taxonomic scope" value="Eukaryota"/>
</dbReference>
<dbReference type="GeneTree" id="ENSGT00940000163068"/>
<dbReference type="HOGENOM" id="CLU_000134_9_2_1"/>
<dbReference type="InParanoid" id="H3BUK9"/>
<dbReference type="OMA" id="LRHQANP"/>
<dbReference type="OrthoDB" id="9537854at2759"/>
<dbReference type="PAN-GO" id="H3BUK9">
    <property type="GO annotations" value="0 GO annotations based on evolutionary models"/>
</dbReference>
<dbReference type="PhylomeDB" id="H3BUK9"/>
<dbReference type="TreeFam" id="TF337879"/>
<dbReference type="PathwayCommons" id="H3BUK9"/>
<dbReference type="SignaLink" id="H3BUK9"/>
<dbReference type="BioGRID-ORCS" id="100287399">
    <property type="hits" value="16 hits in 242 CRISPR screens"/>
</dbReference>
<dbReference type="BioGRID-ORCS" id="100996331">
    <property type="hits" value="8 hits in 607 CRISPR screens"/>
</dbReference>
<dbReference type="Pharos" id="H3BUK9">
    <property type="development level" value="Tdark"/>
</dbReference>
<dbReference type="PRO" id="PR:H3BUK9"/>
<dbReference type="Proteomes" id="UP000005640">
    <property type="component" value="Chromosome 15"/>
</dbReference>
<dbReference type="RNAct" id="H3BUK9">
    <property type="molecule type" value="protein"/>
</dbReference>
<dbReference type="Bgee" id="ENSG00000230031">
    <property type="expression patterns" value="Expressed in male germ line stem cell (sensu Vertebrata) in testis and 5 other cell types or tissues"/>
</dbReference>
<dbReference type="ExpressionAtlas" id="H3BUK9">
    <property type="expression patterns" value="baseline"/>
</dbReference>
<dbReference type="Gene3D" id="1.25.40.20">
    <property type="entry name" value="Ankyrin repeat-containing domain"/>
    <property type="match status" value="1"/>
</dbReference>
<dbReference type="InterPro" id="IPR050657">
    <property type="entry name" value="Ankyrin_repeat_domain"/>
</dbReference>
<dbReference type="InterPro" id="IPR002110">
    <property type="entry name" value="Ankyrin_rpt"/>
</dbReference>
<dbReference type="InterPro" id="IPR036770">
    <property type="entry name" value="Ankyrin_rpt-contain_sf"/>
</dbReference>
<dbReference type="InterPro" id="IPR039497">
    <property type="entry name" value="CC144C-like_CC_dom"/>
</dbReference>
<dbReference type="PANTHER" id="PTHR24147">
    <property type="entry name" value="ANKYRIN REPEAT DOMAIN 36-RELATED"/>
    <property type="match status" value="1"/>
</dbReference>
<dbReference type="PANTHER" id="PTHR24147:SF66">
    <property type="entry name" value="POTE ANKYRIN DOMAIN FAMILY MEMBER D"/>
    <property type="match status" value="1"/>
</dbReference>
<dbReference type="Pfam" id="PF12796">
    <property type="entry name" value="Ank_2"/>
    <property type="match status" value="2"/>
</dbReference>
<dbReference type="Pfam" id="PF14915">
    <property type="entry name" value="CCDC144C"/>
    <property type="match status" value="1"/>
</dbReference>
<dbReference type="PRINTS" id="PR01415">
    <property type="entry name" value="ANKYRIN"/>
</dbReference>
<dbReference type="SMART" id="SM00248">
    <property type="entry name" value="ANK"/>
    <property type="match status" value="6"/>
</dbReference>
<dbReference type="SUPFAM" id="SSF48403">
    <property type="entry name" value="Ankyrin repeat"/>
    <property type="match status" value="1"/>
</dbReference>
<dbReference type="PROSITE" id="PS50297">
    <property type="entry name" value="ANK_REP_REGION"/>
    <property type="match status" value="1"/>
</dbReference>
<dbReference type="PROSITE" id="PS50088">
    <property type="entry name" value="ANK_REPEAT"/>
    <property type="match status" value="5"/>
</dbReference>
<protein>
    <recommendedName>
        <fullName>POTE ankyrin domain family member B2</fullName>
    </recommendedName>
</protein>
<proteinExistence type="inferred from homology"/>
<reference key="1">
    <citation type="journal article" date="2006" name="Nature">
        <title>Analysis of the DNA sequence and duplication history of human chromosome 15.</title>
        <authorList>
            <person name="Zody M.C."/>
            <person name="Garber M."/>
            <person name="Sharpe T."/>
            <person name="Young S.K."/>
            <person name="Rowen L."/>
            <person name="O'Neill K."/>
            <person name="Whittaker C.A."/>
            <person name="Kamal M."/>
            <person name="Chang J.L."/>
            <person name="Cuomo C.A."/>
            <person name="Dewar K."/>
            <person name="FitzGerald M.G."/>
            <person name="Kodira C.D."/>
            <person name="Madan A."/>
            <person name="Qin S."/>
            <person name="Yang X."/>
            <person name="Abbasi N."/>
            <person name="Abouelleil A."/>
            <person name="Arachchi H.M."/>
            <person name="Baradarani L."/>
            <person name="Birditt B."/>
            <person name="Bloom S."/>
            <person name="Bloom T."/>
            <person name="Borowsky M.L."/>
            <person name="Burke J."/>
            <person name="Butler J."/>
            <person name="Cook A."/>
            <person name="DeArellano K."/>
            <person name="DeCaprio D."/>
            <person name="Dorris L. III"/>
            <person name="Dors M."/>
            <person name="Eichler E.E."/>
            <person name="Engels R."/>
            <person name="Fahey J."/>
            <person name="Fleetwood P."/>
            <person name="Friedman C."/>
            <person name="Gearin G."/>
            <person name="Hall J.L."/>
            <person name="Hensley G."/>
            <person name="Johnson E."/>
            <person name="Jones C."/>
            <person name="Kamat A."/>
            <person name="Kaur A."/>
            <person name="Locke D.P."/>
            <person name="Madan A."/>
            <person name="Munson G."/>
            <person name="Jaffe D.B."/>
            <person name="Lui A."/>
            <person name="Macdonald P."/>
            <person name="Mauceli E."/>
            <person name="Naylor J.W."/>
            <person name="Nesbitt R."/>
            <person name="Nicol R."/>
            <person name="O'Leary S.B."/>
            <person name="Ratcliffe A."/>
            <person name="Rounsley S."/>
            <person name="She X."/>
            <person name="Sneddon K.M.B."/>
            <person name="Stewart S."/>
            <person name="Sougnez C."/>
            <person name="Stone S.M."/>
            <person name="Topham K."/>
            <person name="Vincent D."/>
            <person name="Wang S."/>
            <person name="Zimmer A.R."/>
            <person name="Birren B.W."/>
            <person name="Hood L."/>
            <person name="Lander E.S."/>
            <person name="Nusbaum C."/>
        </authorList>
    </citation>
    <scope>NUCLEOTIDE SEQUENCE [LARGE SCALE GENOMIC DNA]</scope>
</reference>
<sequence>MVAEVCSMPAASAVKKPFDLRSKMGKWCHHRFPCCRGSGTSNVGTSGDHDDSFMKTLRSKMGKWCCHCFPCCRGSGKSNVGTWGDYDDSAFMEPRYHVRREDLDKLHRAAWWGKVPRKDLIVMLRDTDMNKRDKQKRTALHLASANGNSEVVQLLLDRRCQLNVLDNKKRTALIKAVQCQEDECVLMLLEHGADGNIQDEYGNTALHYAIYNEDKLMAKALLLYGADIESKNKCGLTPLLLGVHEQKQEVVKFLIKKKANLNALDRYGRTALILAVCCGSASIVNLLLEQNVDVSSQDLSGQTAREYAVSSHHHVICELLSDYKEKQMLKISSENSNPEQDLKLTSEEESQRLKVSENSQPEKMSQEPEINKDCDREVEEEIKKHGSNPVGLPENLTNGASAGNGDDGLIPQRKSRKPENQQFPDTENEEYHSDEQNDTQKQLSEEQNTGISQDEILTNKQKQIEVAEKEMNSELSLSHKKEEDLLRENSMLREEIAKLRLELDETKHQNQLRENKILEEIESVKEKLLKTIQLNEEALTKTSI</sequence>
<gene>
    <name type="primary">POTEB2</name>
</gene>
<evidence type="ECO:0000256" key="1">
    <source>
        <dbReference type="SAM" id="MobiDB-lite"/>
    </source>
</evidence>
<evidence type="ECO:0000305" key="2"/>
<name>POTB2_HUMAN</name>
<keyword id="KW-0040">ANK repeat</keyword>
<keyword id="KW-0175">Coiled coil</keyword>
<keyword id="KW-1185">Reference proteome</keyword>
<keyword id="KW-0677">Repeat</keyword>